<name>HSL48_DICDI</name>
<dbReference type="EMBL" id="AAFI02000040">
    <property type="protein sequence ID" value="EAL66802.1"/>
    <property type="molecule type" value="Genomic_DNA"/>
</dbReference>
<dbReference type="RefSeq" id="XP_640766.1">
    <property type="nucleotide sequence ID" value="XM_635674.1"/>
</dbReference>
<dbReference type="FunCoup" id="Q54UL0">
    <property type="interactions" value="108"/>
</dbReference>
<dbReference type="PaxDb" id="44689-DDB0252779"/>
<dbReference type="EnsemblProtists" id="EAL66802">
    <property type="protein sequence ID" value="EAL66802"/>
    <property type="gene ID" value="DDB_G0281011"/>
</dbReference>
<dbReference type="GeneID" id="8622819"/>
<dbReference type="KEGG" id="ddi:DDB_G0281011"/>
<dbReference type="dictyBase" id="DDB_G0281011"/>
<dbReference type="HOGENOM" id="CLU_181850_0_0_1"/>
<dbReference type="InParanoid" id="Q54UL0"/>
<dbReference type="PRO" id="PR:Q54UL0"/>
<dbReference type="Proteomes" id="UP000002195">
    <property type="component" value="Chromosome 3"/>
</dbReference>
<dbReference type="GO" id="GO:0030587">
    <property type="term" value="P:sorocarp development"/>
    <property type="evidence" value="ECO:0000318"/>
    <property type="project" value="GO_Central"/>
</dbReference>
<dbReference type="InterPro" id="IPR050533">
    <property type="entry name" value="HssA/B-like_chaperone"/>
</dbReference>
<dbReference type="InterPro" id="IPR008455">
    <property type="entry name" value="HssA/B-related"/>
</dbReference>
<dbReference type="PANTHER" id="PTHR31059">
    <property type="entry name" value="HSSA/B-LIKE PROTEIN 1-RELATED-RELATED"/>
    <property type="match status" value="1"/>
</dbReference>
<dbReference type="PANTHER" id="PTHR31059:SF5">
    <property type="entry name" value="HSSA_B-LIKE PROTEIN 1-RELATED"/>
    <property type="match status" value="1"/>
</dbReference>
<dbReference type="Pfam" id="PF05710">
    <property type="entry name" value="Coiled"/>
    <property type="match status" value="1"/>
</dbReference>
<protein>
    <recommendedName>
        <fullName>HssA/B-like protein 48</fullName>
    </recommendedName>
</protein>
<feature type="chain" id="PRO_0000330416" description="HssA/B-like protein 48">
    <location>
        <begin position="1"/>
        <end position="97"/>
    </location>
</feature>
<feature type="region of interest" description="Disordered" evidence="1">
    <location>
        <begin position="1"/>
        <end position="20"/>
    </location>
</feature>
<feature type="region of interest" description="Disordered" evidence="1">
    <location>
        <begin position="78"/>
        <end position="97"/>
    </location>
</feature>
<sequence>MTLFASISSISNPSTSSKSSIVSFGSGTSMGSNSIACGGCGGGSGGILGSGLGFGLGLGLNLSGGFRSRGACRGNNGGSGYPGNGGMGGGNGSCCGI</sequence>
<accession>Q54UL0</accession>
<keyword id="KW-1185">Reference proteome</keyword>
<reference key="1">
    <citation type="journal article" date="2005" name="Nature">
        <title>The genome of the social amoeba Dictyostelium discoideum.</title>
        <authorList>
            <person name="Eichinger L."/>
            <person name="Pachebat J.A."/>
            <person name="Gloeckner G."/>
            <person name="Rajandream M.A."/>
            <person name="Sucgang R."/>
            <person name="Berriman M."/>
            <person name="Song J."/>
            <person name="Olsen R."/>
            <person name="Szafranski K."/>
            <person name="Xu Q."/>
            <person name="Tunggal B."/>
            <person name="Kummerfeld S."/>
            <person name="Madera M."/>
            <person name="Konfortov B.A."/>
            <person name="Rivero F."/>
            <person name="Bankier A.T."/>
            <person name="Lehmann R."/>
            <person name="Hamlin N."/>
            <person name="Davies R."/>
            <person name="Gaudet P."/>
            <person name="Fey P."/>
            <person name="Pilcher K."/>
            <person name="Chen G."/>
            <person name="Saunders D."/>
            <person name="Sodergren E.J."/>
            <person name="Davis P."/>
            <person name="Kerhornou A."/>
            <person name="Nie X."/>
            <person name="Hall N."/>
            <person name="Anjard C."/>
            <person name="Hemphill L."/>
            <person name="Bason N."/>
            <person name="Farbrother P."/>
            <person name="Desany B."/>
            <person name="Just E."/>
            <person name="Morio T."/>
            <person name="Rost R."/>
            <person name="Churcher C.M."/>
            <person name="Cooper J."/>
            <person name="Haydock S."/>
            <person name="van Driessche N."/>
            <person name="Cronin A."/>
            <person name="Goodhead I."/>
            <person name="Muzny D.M."/>
            <person name="Mourier T."/>
            <person name="Pain A."/>
            <person name="Lu M."/>
            <person name="Harper D."/>
            <person name="Lindsay R."/>
            <person name="Hauser H."/>
            <person name="James K.D."/>
            <person name="Quiles M."/>
            <person name="Madan Babu M."/>
            <person name="Saito T."/>
            <person name="Buchrieser C."/>
            <person name="Wardroper A."/>
            <person name="Felder M."/>
            <person name="Thangavelu M."/>
            <person name="Johnson D."/>
            <person name="Knights A."/>
            <person name="Loulseged H."/>
            <person name="Mungall K.L."/>
            <person name="Oliver K."/>
            <person name="Price C."/>
            <person name="Quail M.A."/>
            <person name="Urushihara H."/>
            <person name="Hernandez J."/>
            <person name="Rabbinowitsch E."/>
            <person name="Steffen D."/>
            <person name="Sanders M."/>
            <person name="Ma J."/>
            <person name="Kohara Y."/>
            <person name="Sharp S."/>
            <person name="Simmonds M.N."/>
            <person name="Spiegler S."/>
            <person name="Tivey A."/>
            <person name="Sugano S."/>
            <person name="White B."/>
            <person name="Walker D."/>
            <person name="Woodward J.R."/>
            <person name="Winckler T."/>
            <person name="Tanaka Y."/>
            <person name="Shaulsky G."/>
            <person name="Schleicher M."/>
            <person name="Weinstock G.M."/>
            <person name="Rosenthal A."/>
            <person name="Cox E.C."/>
            <person name="Chisholm R.L."/>
            <person name="Gibbs R.A."/>
            <person name="Loomis W.F."/>
            <person name="Platzer M."/>
            <person name="Kay R.R."/>
            <person name="Williams J.G."/>
            <person name="Dear P.H."/>
            <person name="Noegel A.A."/>
            <person name="Barrell B.G."/>
            <person name="Kuspa A."/>
        </authorList>
    </citation>
    <scope>NUCLEOTIDE SEQUENCE [LARGE SCALE GENOMIC DNA]</scope>
    <source>
        <strain>AX4</strain>
    </source>
</reference>
<organism>
    <name type="scientific">Dictyostelium discoideum</name>
    <name type="common">Social amoeba</name>
    <dbReference type="NCBI Taxonomy" id="44689"/>
    <lineage>
        <taxon>Eukaryota</taxon>
        <taxon>Amoebozoa</taxon>
        <taxon>Evosea</taxon>
        <taxon>Eumycetozoa</taxon>
        <taxon>Dictyostelia</taxon>
        <taxon>Dictyosteliales</taxon>
        <taxon>Dictyosteliaceae</taxon>
        <taxon>Dictyostelium</taxon>
    </lineage>
</organism>
<proteinExistence type="inferred from homology"/>
<gene>
    <name type="primary">hssl48</name>
    <name type="ORF">DDB_G0281011</name>
</gene>
<comment type="similarity">
    <text evidence="2">Belongs to the hssA/B family.</text>
</comment>
<evidence type="ECO:0000256" key="1">
    <source>
        <dbReference type="SAM" id="MobiDB-lite"/>
    </source>
</evidence>
<evidence type="ECO:0000305" key="2"/>